<gene>
    <name evidence="7" type="primary">tazB</name>
    <name type="ORF">ATEG_03446</name>
</gene>
<proteinExistence type="evidence at transcript level"/>
<dbReference type="EC" id="2.3.1.-" evidence="8"/>
<dbReference type="EMBL" id="CH476597">
    <property type="protein sequence ID" value="EAU36720.1"/>
    <property type="molecule type" value="Genomic_DNA"/>
</dbReference>
<dbReference type="RefSeq" id="XP_001212624.1">
    <property type="nucleotide sequence ID" value="XM_001212624.1"/>
</dbReference>
<dbReference type="SMR" id="Q0CS88"/>
<dbReference type="STRING" id="341663.Q0CS88"/>
<dbReference type="EnsemblFungi" id="EAU36720">
    <property type="protein sequence ID" value="EAU36720"/>
    <property type="gene ID" value="ATEG_03446"/>
</dbReference>
<dbReference type="GeneID" id="4317679"/>
<dbReference type="VEuPathDB" id="FungiDB:ATEG_03446"/>
<dbReference type="eggNOG" id="KOG1202">
    <property type="taxonomic scope" value="Eukaryota"/>
</dbReference>
<dbReference type="HOGENOM" id="CLU_000022_31_0_1"/>
<dbReference type="OMA" id="KNAYHSA"/>
<dbReference type="OrthoDB" id="329835at2759"/>
<dbReference type="Proteomes" id="UP000007963">
    <property type="component" value="Unassembled WGS sequence"/>
</dbReference>
<dbReference type="GO" id="GO:0004312">
    <property type="term" value="F:fatty acid synthase activity"/>
    <property type="evidence" value="ECO:0007669"/>
    <property type="project" value="TreeGrafter"/>
</dbReference>
<dbReference type="GO" id="GO:0016491">
    <property type="term" value="F:oxidoreductase activity"/>
    <property type="evidence" value="ECO:0007669"/>
    <property type="project" value="UniProtKB-KW"/>
</dbReference>
<dbReference type="GO" id="GO:0008270">
    <property type="term" value="F:zinc ion binding"/>
    <property type="evidence" value="ECO:0007669"/>
    <property type="project" value="InterPro"/>
</dbReference>
<dbReference type="GO" id="GO:0006633">
    <property type="term" value="P:fatty acid biosynthetic process"/>
    <property type="evidence" value="ECO:0007669"/>
    <property type="project" value="TreeGrafter"/>
</dbReference>
<dbReference type="GO" id="GO:0044550">
    <property type="term" value="P:secondary metabolite biosynthetic process"/>
    <property type="evidence" value="ECO:0007669"/>
    <property type="project" value="UniProtKB-ARBA"/>
</dbReference>
<dbReference type="CDD" id="cd05195">
    <property type="entry name" value="enoyl_red"/>
    <property type="match status" value="1"/>
</dbReference>
<dbReference type="CDD" id="cd00833">
    <property type="entry name" value="PKS"/>
    <property type="match status" value="1"/>
</dbReference>
<dbReference type="FunFam" id="3.40.50.720:FF:000209">
    <property type="entry name" value="Polyketide synthase Pks12"/>
    <property type="match status" value="1"/>
</dbReference>
<dbReference type="Gene3D" id="3.30.70.3290">
    <property type="match status" value="1"/>
</dbReference>
<dbReference type="Gene3D" id="3.40.47.10">
    <property type="match status" value="1"/>
</dbReference>
<dbReference type="Gene3D" id="3.40.366.10">
    <property type="entry name" value="Malonyl-Coenzyme A Acyl Carrier Protein, domain 2"/>
    <property type="match status" value="1"/>
</dbReference>
<dbReference type="Gene3D" id="3.90.180.10">
    <property type="entry name" value="Medium-chain alcohol dehydrogenases, catalytic domain"/>
    <property type="match status" value="1"/>
</dbReference>
<dbReference type="Gene3D" id="3.40.50.720">
    <property type="entry name" value="NAD(P)-binding Rossmann-like Domain"/>
    <property type="match status" value="2"/>
</dbReference>
<dbReference type="Gene3D" id="3.10.129.110">
    <property type="entry name" value="Polyketide synthase dehydratase"/>
    <property type="match status" value="1"/>
</dbReference>
<dbReference type="Gene3D" id="3.40.50.150">
    <property type="entry name" value="Vaccinia Virus protein VP39"/>
    <property type="match status" value="1"/>
</dbReference>
<dbReference type="InterPro" id="IPR001227">
    <property type="entry name" value="Ac_transferase_dom_sf"/>
</dbReference>
<dbReference type="InterPro" id="IPR036736">
    <property type="entry name" value="ACP-like_sf"/>
</dbReference>
<dbReference type="InterPro" id="IPR014043">
    <property type="entry name" value="Acyl_transferase_dom"/>
</dbReference>
<dbReference type="InterPro" id="IPR016035">
    <property type="entry name" value="Acyl_Trfase/lysoPLipase"/>
</dbReference>
<dbReference type="InterPro" id="IPR013149">
    <property type="entry name" value="ADH-like_C"/>
</dbReference>
<dbReference type="InterPro" id="IPR013154">
    <property type="entry name" value="ADH-like_N"/>
</dbReference>
<dbReference type="InterPro" id="IPR002328">
    <property type="entry name" value="ADH_Zn_CS"/>
</dbReference>
<dbReference type="InterPro" id="IPR011032">
    <property type="entry name" value="GroES-like_sf"/>
</dbReference>
<dbReference type="InterPro" id="IPR014031">
    <property type="entry name" value="Ketoacyl_synth_C"/>
</dbReference>
<dbReference type="InterPro" id="IPR014030">
    <property type="entry name" value="Ketoacyl_synth_N"/>
</dbReference>
<dbReference type="InterPro" id="IPR016036">
    <property type="entry name" value="Malonyl_transacylase_ACP-bd"/>
</dbReference>
<dbReference type="InterPro" id="IPR036291">
    <property type="entry name" value="NAD(P)-bd_dom_sf"/>
</dbReference>
<dbReference type="InterPro" id="IPR020841">
    <property type="entry name" value="PKS_Beta-ketoAc_synthase_dom"/>
</dbReference>
<dbReference type="InterPro" id="IPR042104">
    <property type="entry name" value="PKS_dehydratase_sf"/>
</dbReference>
<dbReference type="InterPro" id="IPR020807">
    <property type="entry name" value="PKS_DH"/>
</dbReference>
<dbReference type="InterPro" id="IPR049551">
    <property type="entry name" value="PKS_DH_C"/>
</dbReference>
<dbReference type="InterPro" id="IPR049552">
    <property type="entry name" value="PKS_DH_N"/>
</dbReference>
<dbReference type="InterPro" id="IPR020843">
    <property type="entry name" value="PKS_ER"/>
</dbReference>
<dbReference type="InterPro" id="IPR013968">
    <property type="entry name" value="PKS_KR"/>
</dbReference>
<dbReference type="InterPro" id="IPR049900">
    <property type="entry name" value="PKS_mFAS_DH"/>
</dbReference>
<dbReference type="InterPro" id="IPR050091">
    <property type="entry name" value="PKS_NRPS_Biosynth_Enz"/>
</dbReference>
<dbReference type="InterPro" id="IPR009081">
    <property type="entry name" value="PP-bd_ACP"/>
</dbReference>
<dbReference type="InterPro" id="IPR029063">
    <property type="entry name" value="SAM-dependent_MTases_sf"/>
</dbReference>
<dbReference type="InterPro" id="IPR016039">
    <property type="entry name" value="Thiolase-like"/>
</dbReference>
<dbReference type="PANTHER" id="PTHR43775:SF29">
    <property type="entry name" value="ASPERFURANONE POLYKETIDE SYNTHASE AFOG-RELATED"/>
    <property type="match status" value="1"/>
</dbReference>
<dbReference type="PANTHER" id="PTHR43775">
    <property type="entry name" value="FATTY ACID SYNTHASE"/>
    <property type="match status" value="1"/>
</dbReference>
<dbReference type="Pfam" id="PF00698">
    <property type="entry name" value="Acyl_transf_1"/>
    <property type="match status" value="1"/>
</dbReference>
<dbReference type="Pfam" id="PF08240">
    <property type="entry name" value="ADH_N"/>
    <property type="match status" value="1"/>
</dbReference>
<dbReference type="Pfam" id="PF00107">
    <property type="entry name" value="ADH_zinc_N"/>
    <property type="match status" value="1"/>
</dbReference>
<dbReference type="Pfam" id="PF00109">
    <property type="entry name" value="ketoacyl-synt"/>
    <property type="match status" value="1"/>
</dbReference>
<dbReference type="Pfam" id="PF02801">
    <property type="entry name" value="Ketoacyl-synt_C"/>
    <property type="match status" value="1"/>
</dbReference>
<dbReference type="Pfam" id="PF08659">
    <property type="entry name" value="KR"/>
    <property type="match status" value="1"/>
</dbReference>
<dbReference type="Pfam" id="PF21089">
    <property type="entry name" value="PKS_DH_N"/>
    <property type="match status" value="1"/>
</dbReference>
<dbReference type="Pfam" id="PF00550">
    <property type="entry name" value="PP-binding"/>
    <property type="match status" value="1"/>
</dbReference>
<dbReference type="Pfam" id="PF14765">
    <property type="entry name" value="PS-DH"/>
    <property type="match status" value="1"/>
</dbReference>
<dbReference type="SMART" id="SM00827">
    <property type="entry name" value="PKS_AT"/>
    <property type="match status" value="1"/>
</dbReference>
<dbReference type="SMART" id="SM00826">
    <property type="entry name" value="PKS_DH"/>
    <property type="match status" value="1"/>
</dbReference>
<dbReference type="SMART" id="SM00829">
    <property type="entry name" value="PKS_ER"/>
    <property type="match status" value="1"/>
</dbReference>
<dbReference type="SMART" id="SM00822">
    <property type="entry name" value="PKS_KR"/>
    <property type="match status" value="1"/>
</dbReference>
<dbReference type="SMART" id="SM00825">
    <property type="entry name" value="PKS_KS"/>
    <property type="match status" value="1"/>
</dbReference>
<dbReference type="SUPFAM" id="SSF47336">
    <property type="entry name" value="ACP-like"/>
    <property type="match status" value="1"/>
</dbReference>
<dbReference type="SUPFAM" id="SSF52151">
    <property type="entry name" value="FabD/lysophospholipase-like"/>
    <property type="match status" value="1"/>
</dbReference>
<dbReference type="SUPFAM" id="SSF50129">
    <property type="entry name" value="GroES-like"/>
    <property type="match status" value="1"/>
</dbReference>
<dbReference type="SUPFAM" id="SSF51735">
    <property type="entry name" value="NAD(P)-binding Rossmann-fold domains"/>
    <property type="match status" value="2"/>
</dbReference>
<dbReference type="SUPFAM" id="SSF55048">
    <property type="entry name" value="Probable ACP-binding domain of malonyl-CoA ACP transacylase"/>
    <property type="match status" value="1"/>
</dbReference>
<dbReference type="SUPFAM" id="SSF53335">
    <property type="entry name" value="S-adenosyl-L-methionine-dependent methyltransferases"/>
    <property type="match status" value="1"/>
</dbReference>
<dbReference type="SUPFAM" id="SSF53901">
    <property type="entry name" value="Thiolase-like"/>
    <property type="match status" value="1"/>
</dbReference>
<dbReference type="PROSITE" id="PS00059">
    <property type="entry name" value="ADH_ZINC"/>
    <property type="match status" value="1"/>
</dbReference>
<dbReference type="PROSITE" id="PS50075">
    <property type="entry name" value="CARRIER"/>
    <property type="match status" value="1"/>
</dbReference>
<dbReference type="PROSITE" id="PS52004">
    <property type="entry name" value="KS3_2"/>
    <property type="match status" value="1"/>
</dbReference>
<dbReference type="PROSITE" id="PS52019">
    <property type="entry name" value="PKS_MFAS_DH"/>
    <property type="match status" value="1"/>
</dbReference>
<feature type="chain" id="PRO_0000456065" description="Highly reducing polyketide synthase tazB">
    <location>
        <begin position="1"/>
        <end position="2620"/>
    </location>
</feature>
<feature type="domain" description="Ketosynthase family 3 (KS3)" evidence="3">
    <location>
        <begin position="1"/>
        <end position="416"/>
    </location>
</feature>
<feature type="domain" description="PKS/mFAS DH" evidence="4">
    <location>
        <begin position="993"/>
        <end position="1318"/>
    </location>
</feature>
<feature type="domain" description="Carrier" evidence="2">
    <location>
        <begin position="2539"/>
        <end position="2620"/>
    </location>
</feature>
<feature type="region of interest" description="Disordered" evidence="5">
    <location>
        <begin position="1"/>
        <end position="22"/>
    </location>
</feature>
<feature type="region of interest" description="Disordered" evidence="5">
    <location>
        <begin position="460"/>
        <end position="481"/>
    </location>
</feature>
<feature type="region of interest" description="Malonyl-CoA:ACP transacylase (MAT) domain" evidence="1">
    <location>
        <begin position="601"/>
        <end position="923"/>
    </location>
</feature>
<feature type="region of interest" description="Dehydratase (DH) domain" evidence="1">
    <location>
        <begin position="993"/>
        <end position="1313"/>
    </location>
</feature>
<feature type="region of interest" description="N-terminal hotdog fold" evidence="4">
    <location>
        <begin position="993"/>
        <end position="1128"/>
    </location>
</feature>
<feature type="region of interest" description="C-terminal hotdog fold" evidence="4">
    <location>
        <begin position="1157"/>
        <end position="1318"/>
    </location>
</feature>
<feature type="region of interest" description="Methyltransferase (CMet) domain" evidence="1">
    <location>
        <begin position="1379"/>
        <end position="1680"/>
    </location>
</feature>
<feature type="region of interest" description="Enoyl reductase (ER) domain" evidence="1">
    <location>
        <begin position="1910"/>
        <end position="2227"/>
    </location>
</feature>
<feature type="region of interest" description="Ketoreductase (KR) domain" evidence="1">
    <location>
        <begin position="2251"/>
        <end position="2425"/>
    </location>
</feature>
<feature type="compositionally biased region" description="Basic and acidic residues" evidence="5">
    <location>
        <begin position="9"/>
        <end position="22"/>
    </location>
</feature>
<feature type="compositionally biased region" description="Low complexity" evidence="5">
    <location>
        <begin position="470"/>
        <end position="481"/>
    </location>
</feature>
<feature type="active site" description="For beta-ketoacyl synthase activity" evidence="3">
    <location>
        <position position="166"/>
    </location>
</feature>
<feature type="active site" description="For beta-ketoacyl synthase activity" evidence="3">
    <location>
        <position position="301"/>
    </location>
</feature>
<feature type="active site" description="For beta-ketoacyl synthase activity" evidence="3">
    <location>
        <position position="340"/>
    </location>
</feature>
<feature type="active site" description="Proton acceptor; for dehydratase activity" evidence="4">
    <location>
        <position position="1025"/>
    </location>
</feature>
<feature type="active site" description="Proton donor; for dehydratase activity" evidence="4">
    <location>
        <position position="1225"/>
    </location>
</feature>
<feature type="modified residue" description="O-(pantetheine 4'-phosphoryl)serine" evidence="2">
    <location>
        <position position="2576"/>
    </location>
</feature>
<reference key="1">
    <citation type="submission" date="2005-09" db="EMBL/GenBank/DDBJ databases">
        <title>Annotation of the Aspergillus terreus NIH2624 genome.</title>
        <authorList>
            <person name="Birren B.W."/>
            <person name="Lander E.S."/>
            <person name="Galagan J.E."/>
            <person name="Nusbaum C."/>
            <person name="Devon K."/>
            <person name="Henn M."/>
            <person name="Ma L.-J."/>
            <person name="Jaffe D.B."/>
            <person name="Butler J."/>
            <person name="Alvarez P."/>
            <person name="Gnerre S."/>
            <person name="Grabherr M."/>
            <person name="Kleber M."/>
            <person name="Mauceli E.W."/>
            <person name="Brockman W."/>
            <person name="Rounsley S."/>
            <person name="Young S.K."/>
            <person name="LaButti K."/>
            <person name="Pushparaj V."/>
            <person name="DeCaprio D."/>
            <person name="Crawford M."/>
            <person name="Koehrsen M."/>
            <person name="Engels R."/>
            <person name="Montgomery P."/>
            <person name="Pearson M."/>
            <person name="Howarth C."/>
            <person name="Larson L."/>
            <person name="Luoma S."/>
            <person name="White J."/>
            <person name="Alvarado L."/>
            <person name="Kodira C.D."/>
            <person name="Zeng Q."/>
            <person name="Oleary S."/>
            <person name="Yandava C."/>
            <person name="Denning D.W."/>
            <person name="Nierman W.C."/>
            <person name="Milne T."/>
            <person name="Madden K."/>
        </authorList>
    </citation>
    <scope>NUCLEOTIDE SEQUENCE [LARGE SCALE GENOMIC DNA]</scope>
    <source>
        <strain>NIH 2624 / FGSC A1156</strain>
    </source>
</reference>
<reference key="2">
    <citation type="journal article" date="2022" name="Fungal Genet. Biol.">
        <title>Characterization of a silent azaphilone biosynthesis gene cluster in Aspergillus terreus NIH 2624.</title>
        <authorList>
            <person name="Sun W.W."/>
            <person name="Li C.Y."/>
            <person name="Chiang Y.M."/>
            <person name="Lin T.S."/>
            <person name="Warren S."/>
            <person name="Chang F.R."/>
            <person name="Wang C.C.C."/>
        </authorList>
    </citation>
    <scope>FUNCTION</scope>
    <scope>INDUCTION</scope>
    <scope>DISRUPTION PHENOTYPE</scope>
    <scope>PATHWAY</scope>
</reference>
<comment type="function">
    <text evidence="6 8">Highly reducing polyketide synthase; part of the gene cluster that mediates the biosynthesis of azaterrilone A and other azaphilones, a class of fungal metabolites characterized by a highly oxygenated pyrano-quinone bicyclic core and exhibiting a broad range of bioactivities (PubMed:35398258). The first step of the pathway begins with the non-reducing polyketide synthase tazA that assembles one acetyl-CoA starter unit, five malonyl-CoA units, and catalyzes a series of Claisen condensations, methylation, PT-mediated cyclization, and finally releases the first hexaketide precursor through the R-domain. The tazA product then undergoes reduction on its terminal ketone and the following pyran-ring formation by yet undetermined enzyme(s). Dehydration and enoyl reduction, possibly involving the trans-enoyl reductase tazE leads to the next intermediate. TazD is predicted as an acetyltransferase and might catalyze the acetylation steps leading to the synthesis of azaterrilone A. Azaterrilone A is not the final product of the taz pathway and both the highly reducing polyketide synthase tazB and the dual enzyme tazHJ catalyze late steps of the pathway, leading to the production of the 2 final stereoisomers that contain additional polyketide modification whose structures have still to be determined (Probable).</text>
</comment>
<comment type="pathway">
    <text evidence="6">Secondary metabolite biosynthesis.</text>
</comment>
<comment type="induction">
    <text evidence="6">Expression is positively regulated by the azaterrilone A cluster-specific transcription factor tazR.</text>
</comment>
<comment type="domain">
    <text evidence="8">Multidomain protein; including a ketosynthase (KS) that catalyzes repeated decarboxylative condensation to elongate the polyketide backbone; a malonyl-CoA:ACP transacylase (MAT) that selects and transfers the extender unit malonyl-CoA; a dehydratase (DH) domain that reduces hydroxyl groups to enoyl groups; a methyltransferase (CMeT) domain responsible for the incorporation of methyl groups; an enoylreductase (ER) domain that reduces enoyl groups to alkyl group; a ketoreductase (KR) domain that catalyzes beta-ketoreduction steps; and an acyl-carrier protein (ACP) that serves as the tether of the growing and completed polyketide via its phosphopantetheinyl arm.</text>
</comment>
<comment type="disruption phenotype">
    <text evidence="6">Does not affect the production of azaterrilone A but impairs the production of the 2 final isomers.</text>
</comment>
<evidence type="ECO:0000255" key="1"/>
<evidence type="ECO:0000255" key="2">
    <source>
        <dbReference type="PROSITE-ProRule" id="PRU00258"/>
    </source>
</evidence>
<evidence type="ECO:0000255" key="3">
    <source>
        <dbReference type="PROSITE-ProRule" id="PRU01348"/>
    </source>
</evidence>
<evidence type="ECO:0000255" key="4">
    <source>
        <dbReference type="PROSITE-ProRule" id="PRU01363"/>
    </source>
</evidence>
<evidence type="ECO:0000256" key="5">
    <source>
        <dbReference type="SAM" id="MobiDB-lite"/>
    </source>
</evidence>
<evidence type="ECO:0000269" key="6">
    <source>
    </source>
</evidence>
<evidence type="ECO:0000303" key="7">
    <source>
    </source>
</evidence>
<evidence type="ECO:0000305" key="8">
    <source>
    </source>
</evidence>
<keyword id="KW-0012">Acyltransferase</keyword>
<keyword id="KW-0479">Metal-binding</keyword>
<keyword id="KW-0511">Multifunctional enzyme</keyword>
<keyword id="KW-0521">NADP</keyword>
<keyword id="KW-0560">Oxidoreductase</keyword>
<keyword id="KW-0596">Phosphopantetheine</keyword>
<keyword id="KW-0597">Phosphoprotein</keyword>
<keyword id="KW-1185">Reference proteome</keyword>
<keyword id="KW-0808">Transferase</keyword>
<keyword id="KW-0862">Zinc</keyword>
<name>TAZB_ASPTN</name>
<organism>
    <name type="scientific">Aspergillus terreus (strain NIH 2624 / FGSC A1156)</name>
    <dbReference type="NCBI Taxonomy" id="341663"/>
    <lineage>
        <taxon>Eukaryota</taxon>
        <taxon>Fungi</taxon>
        <taxon>Dikarya</taxon>
        <taxon>Ascomycota</taxon>
        <taxon>Pezizomycotina</taxon>
        <taxon>Eurotiomycetes</taxon>
        <taxon>Eurotiomycetidae</taxon>
        <taxon>Eurotiales</taxon>
        <taxon>Aspergillaceae</taxon>
        <taxon>Aspergillus</taxon>
        <taxon>Aspergillus subgen. Circumdati</taxon>
    </lineage>
</organism>
<protein>
    <recommendedName>
        <fullName evidence="7">Highly reducing polyketide synthase tazB</fullName>
        <shortName evidence="7">HR-PKS azaB</shortName>
        <ecNumber evidence="8">2.3.1.-</ecNumber>
    </recommendedName>
    <alternativeName>
        <fullName evidence="7">Azaphilone biosynthesis cluster protein B</fullName>
    </alternativeName>
</protein>
<sequence length="2620" mass="287510">MPFLNGNTTHHEAHSAEPDHGNTEPMVIIGLAMRAADEATDAEAFWDFLFYVKGAAFLEESPNGFDAAFFKMSKTEVQSLDPQQRILMENVYHALENAGLPMEDVISSNTSVFVSGFNYHHADRLNSDLELSFKHRPTGAENSMISGRVSWFYDFQGASLTIDTACSSSLVGLHLARQSLQAKESDMAIVSGVSVIGYLSHLMKMSYSGLLGSEGKSLAFDQRADGYGLGEGVGTVILKTLSAAIRDGDTIRAVVRGTGLNHDGHTPGMTYPSAAAQESLIRKTYVAAGLDPKDTIYAESHGTGTQAGDLMECTAIAAAFETEKRDRPFYIGAVKPNVGHLEGGAGITSVIKSVLLLESGIIPPNATLKKINPKIRPEWNLQFPTRCVPWPTTGIRRSSISSYGISGTNAHCILDDAYHYCNQRGISVRHRTAETVPSEKEIELIVAKAVRRYQTNSANGFNKFDEPRGSDSAGSNANGSHGVAGTVGANGNGVNGINPSPGHMPENTKALQASSLLLFSAFDEKSLEKVLAQIRNYISSLDSNSAGQALHDLAFTLSTRRSRLPWKTYALCSSLVELHDMLSKPHLKAIKSRSPLRVGFVFTGQGAQYAQMGQQLLLYPVFRQSLEEASLYFKSLGCDWSLLEELTRDSKDSRISKSAFAHPLSCAVQIALLDLLLSWNVVPHRVVGHSSGEIAAAYCAGKISREGAWRVAYYRGHVLLHGKTDRVGGMLAAGIEEEPLLDLLSQVHAALPGGTLSIACYNSPRNHTISGDDAMVDALKVLLDEQGIFTRKLKVEHAAHSAHMEQFTGEYEELVGDLPSNRLLHFDHTVHMFSTLTGRLIDDSCVPEKSSHWSNSMVGPVEFTKAVSSMCFDSILGDGSSVQGSQVDVILEVGPHPAMQSAVKDILGLGSGIPYLATLSRKDTGLGTLLDTIGSLAAHGAPVDLDKVNRSANPLLKPRMLADLPPYPFSHEEQGLYESRLIKNIRLRQFPRHDLFGAPVPDWNPNSPRWRHFLRVSENPWLKEHVIGDEFVFPGAGYMVMAVEGMKQITDPAEMVGIFLRDVKFKAMLVVPDDTQGVEVCLSFYPVPESRTSLSTAWKRFEVASYNQKTEEWIEHCTGEVSPDLKKSLNPIDGTRTQEAEKAQFSAFAQSRQDVCTAPVDFTPVYDHLRKIGVNHGPSFRNLAAVNIGDREQGLMTGDIVVPDITQVMPEKYAHGHLIHPTTLDNAFHASFASIYDLEGKTMMRRGCVPSYVQDVWLSATALSSDPGTILRCTSEASHALHGAFESTVHAWDPANPSERLISLAGIRLSPFKPESSESIAAENRTCYSVEWYPDLNLLTKREFQKLLSRFPAPLETFDAQQKWFSQLQLASTLLATDGLRESREMKDVNLEDHQRGYRELLRAIAAGVTTQSIPYVSLDMWLEYSRNSDLKEQLYREIEDQSPDGALLVRMGAAIPSILGREITAQYLLYEQDDLLSVWDENRLSRGKILPALTQYLTLLRKSQRGLRVLELGSRTGVLAEHVLKTLCVDGTENSIEQYTIRSQSADHCEKLKKRLSAWVDIIRYEALDLTAKSSEQEIQINPFDLVIVNNFVRGQPNMEEMMLRLNSLMRQGGRLLILEDVRSESLHANIIFGALPGWREATKASWDAESGTDKLEWDRVLRNTGFSGVDFEASSSIYPDFADFSLVASTASHGMLEATPPSFEVLVIIQSHSEISRSLARGLLTAGVSHSICLIDDIRADNVIGRVCISLLEAEQPILNSMDETTFQAIQNLVTACDSLLWVTGDPLAHPEFQMATGLIRTIRWELDRNDLNLITIALDGESTASTDMNVDALIRVLRYQFLDQCSKDSGNTNSEYRIRDSVIETNHAVKNTVASAVIEAQFSSPKPTLSTWESIERPVRLINTSPGIDSLTWVTDEDISRKPLAVNEIEIDVHAVGLNFKDLLVAMGEIDQPGFGHEAAGIVVRVGSSVSTFKAGDRVMYLGDPSPGKMGTLRTRSRVHCGLAIKIPDTMGFEIAAGLPIIYGTVIYSLGHIARLRAGEKVLIHAAAGGIGQAAIQYAHAKGAEIFVTLSSLEKKQYIMENFHIRPDHIFSSRDLNFAAGIKRIAPAGVDVVLNSLSGEALRQSWQCVAPFGRFVEIGKLDLQAGSKLDMTPFLYNVSFSGVDLNALAENRPEVCQELLQETIDLWSNQDIHEARPTQVLDYGQLKEGLRLLQTGKSIGKVTLVPGTHPVSVIPPPFLPLELDANASFILAGGLGGIGRSIALRLARRGAKHIVFLSRSATVHEAGQETIAKLKLLGCTSHVFQCDISNETRLLEVITRVRETLPPIKGCIQCSFVLKDKAFDSMTHEEWQTALTPKVSGSWNLHCLLPDVDFFLLLSSITGIVGNRSQANYNAGNNFQDSLARYRVSKGMHGASVNLGAVVGIGFIAENAEYAAKHTFKMANPQTEEEVLATVEYLIDRRHHMALSPDTAQLICGLRTPASYSLSNEAPPTHLKYPMFAQLPPALSNTGPGGSHSAQSATHIRDQLQSATAPEEAARIIHKALRRKMADLLNISEDTIDDSLNVRANGVDSLIEMEFRTWFAKELGATVPLKDLAKDLTQLSARLVSLSSFTKFR</sequence>
<accession>Q0CS88</accession>